<comment type="function">
    <text evidence="1">Succinyl-CoA synthetase functions in the citric acid cycle (TCA), coupling the hydrolysis of succinyl-CoA to the synthesis of either ATP or GTP and thus represents the only step of substrate-level phosphorylation in the TCA. The beta subunit provides nucleotide specificity of the enzyme and binds the substrate succinate, while the binding sites for coenzyme A and phosphate are found in the alpha subunit.</text>
</comment>
<comment type="catalytic activity">
    <reaction evidence="1">
        <text>succinate + ATP + CoA = succinyl-CoA + ADP + phosphate</text>
        <dbReference type="Rhea" id="RHEA:17661"/>
        <dbReference type="ChEBI" id="CHEBI:30031"/>
        <dbReference type="ChEBI" id="CHEBI:30616"/>
        <dbReference type="ChEBI" id="CHEBI:43474"/>
        <dbReference type="ChEBI" id="CHEBI:57287"/>
        <dbReference type="ChEBI" id="CHEBI:57292"/>
        <dbReference type="ChEBI" id="CHEBI:456216"/>
        <dbReference type="EC" id="6.2.1.5"/>
    </reaction>
    <physiologicalReaction direction="right-to-left" evidence="1">
        <dbReference type="Rhea" id="RHEA:17663"/>
    </physiologicalReaction>
</comment>
<comment type="catalytic activity">
    <reaction evidence="1">
        <text>GTP + succinate + CoA = succinyl-CoA + GDP + phosphate</text>
        <dbReference type="Rhea" id="RHEA:22120"/>
        <dbReference type="ChEBI" id="CHEBI:30031"/>
        <dbReference type="ChEBI" id="CHEBI:37565"/>
        <dbReference type="ChEBI" id="CHEBI:43474"/>
        <dbReference type="ChEBI" id="CHEBI:57287"/>
        <dbReference type="ChEBI" id="CHEBI:57292"/>
        <dbReference type="ChEBI" id="CHEBI:58189"/>
    </reaction>
    <physiologicalReaction direction="right-to-left" evidence="1">
        <dbReference type="Rhea" id="RHEA:22122"/>
    </physiologicalReaction>
</comment>
<comment type="cofactor">
    <cofactor evidence="1">
        <name>Mg(2+)</name>
        <dbReference type="ChEBI" id="CHEBI:18420"/>
    </cofactor>
    <text evidence="1">Binds 1 Mg(2+) ion per subunit.</text>
</comment>
<comment type="pathway">
    <text evidence="1">Carbohydrate metabolism; tricarboxylic acid cycle; succinate from succinyl-CoA (ligase route): step 1/1.</text>
</comment>
<comment type="subunit">
    <text evidence="1">Heterotetramer of two alpha and two beta subunits.</text>
</comment>
<comment type="similarity">
    <text evidence="1">Belongs to the succinate/malate CoA ligase beta subunit family.</text>
</comment>
<proteinExistence type="inferred from homology"/>
<accession>Q080X8</accession>
<feature type="chain" id="PRO_1000082222" description="Succinate--CoA ligase [ADP-forming] subunit beta">
    <location>
        <begin position="1"/>
        <end position="388"/>
    </location>
</feature>
<feature type="domain" description="ATP-grasp" evidence="1">
    <location>
        <begin position="9"/>
        <end position="244"/>
    </location>
</feature>
<feature type="binding site" evidence="1">
    <location>
        <position position="46"/>
    </location>
    <ligand>
        <name>ATP</name>
        <dbReference type="ChEBI" id="CHEBI:30616"/>
    </ligand>
</feature>
<feature type="binding site" evidence="1">
    <location>
        <begin position="53"/>
        <end position="55"/>
    </location>
    <ligand>
        <name>ATP</name>
        <dbReference type="ChEBI" id="CHEBI:30616"/>
    </ligand>
</feature>
<feature type="binding site" evidence="1">
    <location>
        <position position="99"/>
    </location>
    <ligand>
        <name>ATP</name>
        <dbReference type="ChEBI" id="CHEBI:30616"/>
    </ligand>
</feature>
<feature type="binding site" evidence="1">
    <location>
        <position position="102"/>
    </location>
    <ligand>
        <name>ATP</name>
        <dbReference type="ChEBI" id="CHEBI:30616"/>
    </ligand>
</feature>
<feature type="binding site" evidence="1">
    <location>
        <position position="107"/>
    </location>
    <ligand>
        <name>ATP</name>
        <dbReference type="ChEBI" id="CHEBI:30616"/>
    </ligand>
</feature>
<feature type="binding site" evidence="1">
    <location>
        <position position="199"/>
    </location>
    <ligand>
        <name>Mg(2+)</name>
        <dbReference type="ChEBI" id="CHEBI:18420"/>
    </ligand>
</feature>
<feature type="binding site" evidence="1">
    <location>
        <position position="213"/>
    </location>
    <ligand>
        <name>Mg(2+)</name>
        <dbReference type="ChEBI" id="CHEBI:18420"/>
    </ligand>
</feature>
<feature type="binding site" evidence="1">
    <location>
        <position position="264"/>
    </location>
    <ligand>
        <name>substrate</name>
        <note>ligand shared with subunit alpha</note>
    </ligand>
</feature>
<feature type="binding site" evidence="1">
    <location>
        <begin position="321"/>
        <end position="323"/>
    </location>
    <ligand>
        <name>substrate</name>
        <note>ligand shared with subunit alpha</note>
    </ligand>
</feature>
<organism>
    <name type="scientific">Shewanella frigidimarina (strain NCIMB 400)</name>
    <dbReference type="NCBI Taxonomy" id="318167"/>
    <lineage>
        <taxon>Bacteria</taxon>
        <taxon>Pseudomonadati</taxon>
        <taxon>Pseudomonadota</taxon>
        <taxon>Gammaproteobacteria</taxon>
        <taxon>Alteromonadales</taxon>
        <taxon>Shewanellaceae</taxon>
        <taxon>Shewanella</taxon>
    </lineage>
</organism>
<protein>
    <recommendedName>
        <fullName evidence="1">Succinate--CoA ligase [ADP-forming] subunit beta</fullName>
        <ecNumber evidence="1">6.2.1.5</ecNumber>
    </recommendedName>
    <alternativeName>
        <fullName evidence="1">Succinyl-CoA synthetase subunit beta</fullName>
        <shortName evidence="1">SCS-beta</shortName>
    </alternativeName>
</protein>
<dbReference type="EC" id="6.2.1.5" evidence="1"/>
<dbReference type="EMBL" id="CP000447">
    <property type="protein sequence ID" value="ABI72187.1"/>
    <property type="molecule type" value="Genomic_DNA"/>
</dbReference>
<dbReference type="RefSeq" id="WP_011637796.1">
    <property type="nucleotide sequence ID" value="NC_008345.1"/>
</dbReference>
<dbReference type="SMR" id="Q080X8"/>
<dbReference type="STRING" id="318167.Sfri_2341"/>
<dbReference type="KEGG" id="sfr:Sfri_2341"/>
<dbReference type="eggNOG" id="COG0045">
    <property type="taxonomic scope" value="Bacteria"/>
</dbReference>
<dbReference type="HOGENOM" id="CLU_037430_0_2_6"/>
<dbReference type="OrthoDB" id="9802602at2"/>
<dbReference type="UniPathway" id="UPA00223">
    <property type="reaction ID" value="UER00999"/>
</dbReference>
<dbReference type="Proteomes" id="UP000000684">
    <property type="component" value="Chromosome"/>
</dbReference>
<dbReference type="GO" id="GO:0005829">
    <property type="term" value="C:cytosol"/>
    <property type="evidence" value="ECO:0007669"/>
    <property type="project" value="TreeGrafter"/>
</dbReference>
<dbReference type="GO" id="GO:0042709">
    <property type="term" value="C:succinate-CoA ligase complex"/>
    <property type="evidence" value="ECO:0007669"/>
    <property type="project" value="TreeGrafter"/>
</dbReference>
<dbReference type="GO" id="GO:0005524">
    <property type="term" value="F:ATP binding"/>
    <property type="evidence" value="ECO:0007669"/>
    <property type="project" value="UniProtKB-UniRule"/>
</dbReference>
<dbReference type="GO" id="GO:0000287">
    <property type="term" value="F:magnesium ion binding"/>
    <property type="evidence" value="ECO:0007669"/>
    <property type="project" value="UniProtKB-UniRule"/>
</dbReference>
<dbReference type="GO" id="GO:0004775">
    <property type="term" value="F:succinate-CoA ligase (ADP-forming) activity"/>
    <property type="evidence" value="ECO:0007669"/>
    <property type="project" value="UniProtKB-UniRule"/>
</dbReference>
<dbReference type="GO" id="GO:0004776">
    <property type="term" value="F:succinate-CoA ligase (GDP-forming) activity"/>
    <property type="evidence" value="ECO:0007669"/>
    <property type="project" value="RHEA"/>
</dbReference>
<dbReference type="GO" id="GO:0006104">
    <property type="term" value="P:succinyl-CoA metabolic process"/>
    <property type="evidence" value="ECO:0007669"/>
    <property type="project" value="TreeGrafter"/>
</dbReference>
<dbReference type="GO" id="GO:0006099">
    <property type="term" value="P:tricarboxylic acid cycle"/>
    <property type="evidence" value="ECO:0007669"/>
    <property type="project" value="UniProtKB-UniRule"/>
</dbReference>
<dbReference type="FunFam" id="3.30.1490.20:FF:000002">
    <property type="entry name" value="Succinate--CoA ligase [ADP-forming] subunit beta"/>
    <property type="match status" value="1"/>
</dbReference>
<dbReference type="FunFam" id="3.30.470.20:FF:000002">
    <property type="entry name" value="Succinate--CoA ligase [ADP-forming] subunit beta"/>
    <property type="match status" value="1"/>
</dbReference>
<dbReference type="FunFam" id="3.40.50.261:FF:000001">
    <property type="entry name" value="Succinate--CoA ligase [ADP-forming] subunit beta"/>
    <property type="match status" value="1"/>
</dbReference>
<dbReference type="Gene3D" id="3.30.1490.20">
    <property type="entry name" value="ATP-grasp fold, A domain"/>
    <property type="match status" value="1"/>
</dbReference>
<dbReference type="Gene3D" id="3.30.470.20">
    <property type="entry name" value="ATP-grasp fold, B domain"/>
    <property type="match status" value="1"/>
</dbReference>
<dbReference type="Gene3D" id="3.40.50.261">
    <property type="entry name" value="Succinyl-CoA synthetase domains"/>
    <property type="match status" value="1"/>
</dbReference>
<dbReference type="HAMAP" id="MF_00558">
    <property type="entry name" value="Succ_CoA_beta"/>
    <property type="match status" value="1"/>
</dbReference>
<dbReference type="InterPro" id="IPR011761">
    <property type="entry name" value="ATP-grasp"/>
</dbReference>
<dbReference type="InterPro" id="IPR013650">
    <property type="entry name" value="ATP-grasp_succ-CoA_synth-type"/>
</dbReference>
<dbReference type="InterPro" id="IPR013815">
    <property type="entry name" value="ATP_grasp_subdomain_1"/>
</dbReference>
<dbReference type="InterPro" id="IPR017866">
    <property type="entry name" value="Succ-CoA_synthase_bsu_CS"/>
</dbReference>
<dbReference type="InterPro" id="IPR005811">
    <property type="entry name" value="SUCC_ACL_C"/>
</dbReference>
<dbReference type="InterPro" id="IPR005809">
    <property type="entry name" value="Succ_CoA_ligase-like_bsu"/>
</dbReference>
<dbReference type="InterPro" id="IPR016102">
    <property type="entry name" value="Succinyl-CoA_synth-like"/>
</dbReference>
<dbReference type="NCBIfam" id="NF001913">
    <property type="entry name" value="PRK00696.1"/>
    <property type="match status" value="1"/>
</dbReference>
<dbReference type="NCBIfam" id="TIGR01016">
    <property type="entry name" value="sucCoAbeta"/>
    <property type="match status" value="1"/>
</dbReference>
<dbReference type="PANTHER" id="PTHR11815:SF10">
    <property type="entry name" value="SUCCINATE--COA LIGASE [GDP-FORMING] SUBUNIT BETA, MITOCHONDRIAL"/>
    <property type="match status" value="1"/>
</dbReference>
<dbReference type="PANTHER" id="PTHR11815">
    <property type="entry name" value="SUCCINYL-COA SYNTHETASE BETA CHAIN"/>
    <property type="match status" value="1"/>
</dbReference>
<dbReference type="Pfam" id="PF08442">
    <property type="entry name" value="ATP-grasp_2"/>
    <property type="match status" value="1"/>
</dbReference>
<dbReference type="Pfam" id="PF00549">
    <property type="entry name" value="Ligase_CoA"/>
    <property type="match status" value="1"/>
</dbReference>
<dbReference type="PIRSF" id="PIRSF001554">
    <property type="entry name" value="SucCS_beta"/>
    <property type="match status" value="1"/>
</dbReference>
<dbReference type="SUPFAM" id="SSF56059">
    <property type="entry name" value="Glutathione synthetase ATP-binding domain-like"/>
    <property type="match status" value="1"/>
</dbReference>
<dbReference type="SUPFAM" id="SSF52210">
    <property type="entry name" value="Succinyl-CoA synthetase domains"/>
    <property type="match status" value="1"/>
</dbReference>
<dbReference type="PROSITE" id="PS50975">
    <property type="entry name" value="ATP_GRASP"/>
    <property type="match status" value="1"/>
</dbReference>
<dbReference type="PROSITE" id="PS01217">
    <property type="entry name" value="SUCCINYL_COA_LIG_3"/>
    <property type="match status" value="1"/>
</dbReference>
<keyword id="KW-0067">ATP-binding</keyword>
<keyword id="KW-0436">Ligase</keyword>
<keyword id="KW-0460">Magnesium</keyword>
<keyword id="KW-0479">Metal-binding</keyword>
<keyword id="KW-0547">Nucleotide-binding</keyword>
<keyword id="KW-1185">Reference proteome</keyword>
<keyword id="KW-0816">Tricarboxylic acid cycle</keyword>
<reference key="1">
    <citation type="submission" date="2006-08" db="EMBL/GenBank/DDBJ databases">
        <title>Complete sequence of Shewanella frigidimarina NCIMB 400.</title>
        <authorList>
            <consortium name="US DOE Joint Genome Institute"/>
            <person name="Copeland A."/>
            <person name="Lucas S."/>
            <person name="Lapidus A."/>
            <person name="Barry K."/>
            <person name="Detter J.C."/>
            <person name="Glavina del Rio T."/>
            <person name="Hammon N."/>
            <person name="Israni S."/>
            <person name="Dalin E."/>
            <person name="Tice H."/>
            <person name="Pitluck S."/>
            <person name="Fredrickson J.K."/>
            <person name="Kolker E."/>
            <person name="McCuel L.A."/>
            <person name="DiChristina T."/>
            <person name="Nealson K.H."/>
            <person name="Newman D."/>
            <person name="Tiedje J.M."/>
            <person name="Zhou J."/>
            <person name="Romine M.F."/>
            <person name="Culley D.E."/>
            <person name="Serres M."/>
            <person name="Chertkov O."/>
            <person name="Brettin T."/>
            <person name="Bruce D."/>
            <person name="Han C."/>
            <person name="Tapia R."/>
            <person name="Gilna P."/>
            <person name="Schmutz J."/>
            <person name="Larimer F."/>
            <person name="Land M."/>
            <person name="Hauser L."/>
            <person name="Kyrpides N."/>
            <person name="Mikhailova N."/>
            <person name="Richardson P."/>
        </authorList>
    </citation>
    <scope>NUCLEOTIDE SEQUENCE [LARGE SCALE GENOMIC DNA]</scope>
    <source>
        <strain>NCIMB 400</strain>
    </source>
</reference>
<sequence>MNLHEYQAKSLFAEYGLPVSEGFACDTAQEAVEAAGHIGGNLWVVKCQVHAGGRGKAGGVKVTGNKDEIRAFAENWLGKNLVTYQTDAKGQPVAKILVESCTDIANELYLGAVVDRSTRRVVFMASTEGGVDIETVAEHTPELIHTAIIDPLTGPQAFQARDLGFKLGLNPTQMKQFTKIFMGLANMFNDHDFALLEINPLVITTEGNLHCLDGKIGIDGNALFRQPKIKAMHDPSQDDAREAHAAKFELNYVALDGNVGCMVNGAGLAMGTMDIVNLHGGKPANFLDVGGGATKERVAEAFKIILSDSNVKAVLVNIFGGIVRCDMIAEGIIGAVKEVGVKVPVVVRLEGTNAELGREVLAKSGLDIIAATSLTDAAEQVVKAAEGK</sequence>
<evidence type="ECO:0000255" key="1">
    <source>
        <dbReference type="HAMAP-Rule" id="MF_00558"/>
    </source>
</evidence>
<gene>
    <name evidence="1" type="primary">sucC</name>
    <name type="ordered locus">Sfri_2341</name>
</gene>
<name>SUCC_SHEFN</name>